<protein>
    <recommendedName>
        <fullName evidence="1">ATP synthase subunit a, chloroplastic</fullName>
    </recommendedName>
    <alternativeName>
        <fullName evidence="1">ATP synthase F0 sector subunit a</fullName>
    </alternativeName>
    <alternativeName>
        <fullName evidence="1">F-ATPase subunit IV</fullName>
    </alternativeName>
</protein>
<geneLocation type="chloroplast"/>
<proteinExistence type="inferred from homology"/>
<organism>
    <name type="scientific">Mesostigma viride</name>
    <name type="common">Green alga</name>
    <dbReference type="NCBI Taxonomy" id="41882"/>
    <lineage>
        <taxon>Eukaryota</taxon>
        <taxon>Viridiplantae</taxon>
        <taxon>Streptophyta</taxon>
        <taxon>Mesostigmatophyceae</taxon>
        <taxon>Mesostigmatales</taxon>
        <taxon>Mesostigmataceae</taxon>
        <taxon>Mesostigma</taxon>
    </lineage>
</organism>
<accession>Q9MUS9</accession>
<evidence type="ECO:0000255" key="1">
    <source>
        <dbReference type="HAMAP-Rule" id="MF_01393"/>
    </source>
</evidence>
<gene>
    <name evidence="1" type="primary">atpI</name>
</gene>
<dbReference type="EMBL" id="AF166114">
    <property type="protein sequence ID" value="AAF43822.1"/>
    <property type="molecule type" value="Genomic_DNA"/>
</dbReference>
<dbReference type="RefSeq" id="NP_038381.1">
    <property type="nucleotide sequence ID" value="NC_002186.1"/>
</dbReference>
<dbReference type="SMR" id="Q9MUS9"/>
<dbReference type="GeneID" id="800972"/>
<dbReference type="GO" id="GO:0009535">
    <property type="term" value="C:chloroplast thylakoid membrane"/>
    <property type="evidence" value="ECO:0007669"/>
    <property type="project" value="UniProtKB-SubCell"/>
</dbReference>
<dbReference type="GO" id="GO:0005886">
    <property type="term" value="C:plasma membrane"/>
    <property type="evidence" value="ECO:0007669"/>
    <property type="project" value="UniProtKB-UniRule"/>
</dbReference>
<dbReference type="GO" id="GO:0045259">
    <property type="term" value="C:proton-transporting ATP synthase complex"/>
    <property type="evidence" value="ECO:0007669"/>
    <property type="project" value="UniProtKB-KW"/>
</dbReference>
<dbReference type="GO" id="GO:0046933">
    <property type="term" value="F:proton-transporting ATP synthase activity, rotational mechanism"/>
    <property type="evidence" value="ECO:0007669"/>
    <property type="project" value="UniProtKB-UniRule"/>
</dbReference>
<dbReference type="CDD" id="cd00310">
    <property type="entry name" value="ATP-synt_Fo_a_6"/>
    <property type="match status" value="1"/>
</dbReference>
<dbReference type="FunFam" id="1.20.120.220:FF:000001">
    <property type="entry name" value="ATP synthase subunit a, chloroplastic"/>
    <property type="match status" value="1"/>
</dbReference>
<dbReference type="Gene3D" id="1.20.120.220">
    <property type="entry name" value="ATP synthase, F0 complex, subunit A"/>
    <property type="match status" value="1"/>
</dbReference>
<dbReference type="HAMAP" id="MF_01393">
    <property type="entry name" value="ATP_synth_a_bact"/>
    <property type="match status" value="1"/>
</dbReference>
<dbReference type="InterPro" id="IPR045082">
    <property type="entry name" value="ATP_syn_F0_a_bact/chloroplast"/>
</dbReference>
<dbReference type="InterPro" id="IPR000568">
    <property type="entry name" value="ATP_synth_F0_asu"/>
</dbReference>
<dbReference type="InterPro" id="IPR023011">
    <property type="entry name" value="ATP_synth_F0_asu_AS"/>
</dbReference>
<dbReference type="InterPro" id="IPR035908">
    <property type="entry name" value="F0_ATP_A_sf"/>
</dbReference>
<dbReference type="NCBIfam" id="TIGR01131">
    <property type="entry name" value="ATP_synt_6_or_A"/>
    <property type="match status" value="1"/>
</dbReference>
<dbReference type="PANTHER" id="PTHR42823">
    <property type="entry name" value="ATP SYNTHASE SUBUNIT A, CHLOROPLASTIC"/>
    <property type="match status" value="1"/>
</dbReference>
<dbReference type="PANTHER" id="PTHR42823:SF3">
    <property type="entry name" value="ATP SYNTHASE SUBUNIT A, CHLOROPLASTIC"/>
    <property type="match status" value="1"/>
</dbReference>
<dbReference type="Pfam" id="PF00119">
    <property type="entry name" value="ATP-synt_A"/>
    <property type="match status" value="1"/>
</dbReference>
<dbReference type="PRINTS" id="PR00123">
    <property type="entry name" value="ATPASEA"/>
</dbReference>
<dbReference type="SUPFAM" id="SSF81336">
    <property type="entry name" value="F1F0 ATP synthase subunit A"/>
    <property type="match status" value="1"/>
</dbReference>
<dbReference type="PROSITE" id="PS00449">
    <property type="entry name" value="ATPASE_A"/>
    <property type="match status" value="1"/>
</dbReference>
<reference key="1">
    <citation type="journal article" date="2000" name="Nature">
        <title>Ancestral chloroplast genome in Mesostigma viride reveals an early branch of green plant evolution.</title>
        <authorList>
            <person name="Lemieux C."/>
            <person name="Otis C."/>
            <person name="Turmel M."/>
        </authorList>
    </citation>
    <scope>NUCLEOTIDE SEQUENCE [LARGE SCALE GENOMIC DNA]</scope>
    <source>
        <strain>NIES-296 / KY-14 / CCMP 2046</strain>
    </source>
</reference>
<keyword id="KW-0066">ATP synthesis</keyword>
<keyword id="KW-0138">CF(0)</keyword>
<keyword id="KW-0150">Chloroplast</keyword>
<keyword id="KW-0375">Hydrogen ion transport</keyword>
<keyword id="KW-0406">Ion transport</keyword>
<keyword id="KW-0472">Membrane</keyword>
<keyword id="KW-0934">Plastid</keyword>
<keyword id="KW-0793">Thylakoid</keyword>
<keyword id="KW-0812">Transmembrane</keyword>
<keyword id="KW-1133">Transmembrane helix</keyword>
<keyword id="KW-0813">Transport</keyword>
<sequence>MINPSSMENFNMLYQLSKVEVGQHFYWQIGDFEVHGQVLLVSWFVMTIIISLSIFGTRNLQTIPTGTQNFVEYVLEFIRDLAKTQIGEEDYRSWVPFIGTIFLFIFVSNWSGALVPWKLIEIPNGELAAPTNDINTTAALALLTSISYFYAGFSKKGLRYFKRYISPTPVLLPINLLEDFTKPLSLSFRLFGNILADELVVGVLITLVPLVVPMPLMLLGLFTSAIQALIFATLAAAYIGEAVEDHH</sequence>
<feature type="chain" id="PRO_0000002589" description="ATP synthase subunit a, chloroplastic">
    <location>
        <begin position="1"/>
        <end position="247"/>
    </location>
</feature>
<feature type="transmembrane region" description="Helical" evidence="1">
    <location>
        <begin position="36"/>
        <end position="56"/>
    </location>
</feature>
<feature type="transmembrane region" description="Helical" evidence="1">
    <location>
        <begin position="95"/>
        <end position="115"/>
    </location>
</feature>
<feature type="transmembrane region" description="Helical" evidence="1">
    <location>
        <begin position="134"/>
        <end position="154"/>
    </location>
</feature>
<feature type="transmembrane region" description="Helical" evidence="1">
    <location>
        <begin position="199"/>
        <end position="219"/>
    </location>
</feature>
<feature type="transmembrane region" description="Helical" evidence="1">
    <location>
        <begin position="220"/>
        <end position="240"/>
    </location>
</feature>
<name>ATPI_MESVI</name>
<comment type="function">
    <text evidence="1">Key component of the proton channel; it plays a direct role in the translocation of protons across the membrane.</text>
</comment>
<comment type="subunit">
    <text evidence="1">F-type ATPases have 2 components, CF(1) - the catalytic core - and CF(0) - the membrane proton channel. CF(1) has five subunits: alpha(3), beta(3), gamma(1), delta(1), epsilon(1). CF(0) has four main subunits: a, b, b' and c.</text>
</comment>
<comment type="subcellular location">
    <subcellularLocation>
        <location evidence="1">Plastid</location>
        <location evidence="1">Chloroplast thylakoid membrane</location>
        <topology evidence="1">Multi-pass membrane protein</topology>
    </subcellularLocation>
</comment>
<comment type="similarity">
    <text evidence="1">Belongs to the ATPase A chain family.</text>
</comment>